<evidence type="ECO:0000255" key="1">
    <source>
        <dbReference type="HAMAP-Rule" id="MF_01200"/>
    </source>
</evidence>
<reference key="1">
    <citation type="journal article" date="2008" name="BMC Genomics">
        <title>The genome sequence of the fish pathogen Aliivibrio salmonicida strain LFI1238 shows extensive evidence of gene decay.</title>
        <authorList>
            <person name="Hjerde E."/>
            <person name="Lorentzen M.S."/>
            <person name="Holden M.T."/>
            <person name="Seeger K."/>
            <person name="Paulsen S."/>
            <person name="Bason N."/>
            <person name="Churcher C."/>
            <person name="Harris D."/>
            <person name="Norbertczak H."/>
            <person name="Quail M.A."/>
            <person name="Sanders S."/>
            <person name="Thurston S."/>
            <person name="Parkhill J."/>
            <person name="Willassen N.P."/>
            <person name="Thomson N.R."/>
        </authorList>
    </citation>
    <scope>NUCLEOTIDE SEQUENCE [LARGE SCALE GENOMIC DNA]</scope>
    <source>
        <strain>LFI1238</strain>
    </source>
</reference>
<sequence length="234" mass="25474">MKDQKVIVALDYDRQADALAFVDKIDPSSCRLKVGKEMFTLFGPEFVKELHKRGFSVFLDLKFHDIPNTCSKAVRAAAEMGVWMVNVHASGGERMMTASREILEPYGKDRPLLIGVTVLTSMEQQDLAGIGLDIAPQEQVKRLAALTKNSGLDGVVCSAQEASMLKADLGKYFKLVTPGIRPVGSDVGDQKRIMTPVDAIISGSDYLVIGRPITQAENPSQVLNDINLSLAPVL</sequence>
<comment type="function">
    <text evidence="1">Catalyzes the decarboxylation of orotidine 5'-monophosphate (OMP) to uridine 5'-monophosphate (UMP).</text>
</comment>
<comment type="catalytic activity">
    <reaction evidence="1">
        <text>orotidine 5'-phosphate + H(+) = UMP + CO2</text>
        <dbReference type="Rhea" id="RHEA:11596"/>
        <dbReference type="ChEBI" id="CHEBI:15378"/>
        <dbReference type="ChEBI" id="CHEBI:16526"/>
        <dbReference type="ChEBI" id="CHEBI:57538"/>
        <dbReference type="ChEBI" id="CHEBI:57865"/>
        <dbReference type="EC" id="4.1.1.23"/>
    </reaction>
</comment>
<comment type="pathway">
    <text evidence="1">Pyrimidine metabolism; UMP biosynthesis via de novo pathway; UMP from orotate: step 2/2.</text>
</comment>
<comment type="subunit">
    <text evidence="1">Homodimer.</text>
</comment>
<comment type="similarity">
    <text evidence="1">Belongs to the OMP decarboxylase family. Type 1 subfamily.</text>
</comment>
<keyword id="KW-0210">Decarboxylase</keyword>
<keyword id="KW-0456">Lyase</keyword>
<keyword id="KW-0665">Pyrimidine biosynthesis</keyword>
<name>PYRF_ALISL</name>
<accession>B6EIY4</accession>
<feature type="chain" id="PRO_1000138509" description="Orotidine 5'-phosphate decarboxylase">
    <location>
        <begin position="1"/>
        <end position="234"/>
    </location>
</feature>
<feature type="active site" description="Proton donor" evidence="1">
    <location>
        <position position="62"/>
    </location>
</feature>
<feature type="binding site" evidence="1">
    <location>
        <position position="11"/>
    </location>
    <ligand>
        <name>substrate</name>
    </ligand>
</feature>
<feature type="binding site" evidence="1">
    <location>
        <position position="33"/>
    </location>
    <ligand>
        <name>substrate</name>
    </ligand>
</feature>
<feature type="binding site" evidence="1">
    <location>
        <begin position="60"/>
        <end position="69"/>
    </location>
    <ligand>
        <name>substrate</name>
    </ligand>
</feature>
<feature type="binding site" evidence="1">
    <location>
        <position position="120"/>
    </location>
    <ligand>
        <name>substrate</name>
    </ligand>
</feature>
<feature type="binding site" evidence="1">
    <location>
        <position position="181"/>
    </location>
    <ligand>
        <name>substrate</name>
    </ligand>
</feature>
<feature type="binding site" evidence="1">
    <location>
        <position position="190"/>
    </location>
    <ligand>
        <name>substrate</name>
    </ligand>
</feature>
<feature type="binding site" evidence="1">
    <location>
        <position position="210"/>
    </location>
    <ligand>
        <name>substrate</name>
    </ligand>
</feature>
<feature type="binding site" evidence="1">
    <location>
        <position position="211"/>
    </location>
    <ligand>
        <name>substrate</name>
    </ligand>
</feature>
<protein>
    <recommendedName>
        <fullName evidence="1">Orotidine 5'-phosphate decarboxylase</fullName>
        <ecNumber evidence="1">4.1.1.23</ecNumber>
    </recommendedName>
    <alternativeName>
        <fullName evidence="1">OMP decarboxylase</fullName>
        <shortName evidence="1">OMPDCase</shortName>
        <shortName evidence="1">OMPdecase</shortName>
    </alternativeName>
</protein>
<dbReference type="EC" id="4.1.1.23" evidence="1"/>
<dbReference type="EMBL" id="FM178379">
    <property type="protein sequence ID" value="CAQ79909.1"/>
    <property type="molecule type" value="Genomic_DNA"/>
</dbReference>
<dbReference type="RefSeq" id="WP_012550739.1">
    <property type="nucleotide sequence ID" value="NC_011312.1"/>
</dbReference>
<dbReference type="SMR" id="B6EIY4"/>
<dbReference type="KEGG" id="vsa:VSAL_I2225"/>
<dbReference type="eggNOG" id="COG0284">
    <property type="taxonomic scope" value="Bacteria"/>
</dbReference>
<dbReference type="HOGENOM" id="CLU_067069_0_0_6"/>
<dbReference type="UniPathway" id="UPA00070">
    <property type="reaction ID" value="UER00120"/>
</dbReference>
<dbReference type="Proteomes" id="UP000001730">
    <property type="component" value="Chromosome 1"/>
</dbReference>
<dbReference type="GO" id="GO:0005829">
    <property type="term" value="C:cytosol"/>
    <property type="evidence" value="ECO:0007669"/>
    <property type="project" value="TreeGrafter"/>
</dbReference>
<dbReference type="GO" id="GO:0004590">
    <property type="term" value="F:orotidine-5'-phosphate decarboxylase activity"/>
    <property type="evidence" value="ECO:0007669"/>
    <property type="project" value="UniProtKB-UniRule"/>
</dbReference>
<dbReference type="GO" id="GO:0006207">
    <property type="term" value="P:'de novo' pyrimidine nucleobase biosynthetic process"/>
    <property type="evidence" value="ECO:0007669"/>
    <property type="project" value="InterPro"/>
</dbReference>
<dbReference type="GO" id="GO:0044205">
    <property type="term" value="P:'de novo' UMP biosynthetic process"/>
    <property type="evidence" value="ECO:0007669"/>
    <property type="project" value="UniProtKB-UniRule"/>
</dbReference>
<dbReference type="CDD" id="cd04725">
    <property type="entry name" value="OMP_decarboxylase_like"/>
    <property type="match status" value="1"/>
</dbReference>
<dbReference type="FunFam" id="3.20.20.70:FF:000015">
    <property type="entry name" value="Orotidine 5'-phosphate decarboxylase"/>
    <property type="match status" value="1"/>
</dbReference>
<dbReference type="Gene3D" id="3.20.20.70">
    <property type="entry name" value="Aldolase class I"/>
    <property type="match status" value="1"/>
</dbReference>
<dbReference type="HAMAP" id="MF_01200_B">
    <property type="entry name" value="OMPdecase_type1_B"/>
    <property type="match status" value="1"/>
</dbReference>
<dbReference type="InterPro" id="IPR013785">
    <property type="entry name" value="Aldolase_TIM"/>
</dbReference>
<dbReference type="InterPro" id="IPR014732">
    <property type="entry name" value="OMPdecase"/>
</dbReference>
<dbReference type="InterPro" id="IPR018089">
    <property type="entry name" value="OMPdecase_AS"/>
</dbReference>
<dbReference type="InterPro" id="IPR047596">
    <property type="entry name" value="OMPdecase_bac"/>
</dbReference>
<dbReference type="InterPro" id="IPR001754">
    <property type="entry name" value="OMPdeCOase_dom"/>
</dbReference>
<dbReference type="InterPro" id="IPR011060">
    <property type="entry name" value="RibuloseP-bd_barrel"/>
</dbReference>
<dbReference type="NCBIfam" id="NF001273">
    <property type="entry name" value="PRK00230.1"/>
    <property type="match status" value="1"/>
</dbReference>
<dbReference type="NCBIfam" id="TIGR01740">
    <property type="entry name" value="pyrF"/>
    <property type="match status" value="1"/>
</dbReference>
<dbReference type="PANTHER" id="PTHR32119">
    <property type="entry name" value="OROTIDINE 5'-PHOSPHATE DECARBOXYLASE"/>
    <property type="match status" value="1"/>
</dbReference>
<dbReference type="PANTHER" id="PTHR32119:SF2">
    <property type="entry name" value="OROTIDINE 5'-PHOSPHATE DECARBOXYLASE"/>
    <property type="match status" value="1"/>
</dbReference>
<dbReference type="Pfam" id="PF00215">
    <property type="entry name" value="OMPdecase"/>
    <property type="match status" value="1"/>
</dbReference>
<dbReference type="SMART" id="SM00934">
    <property type="entry name" value="OMPdecase"/>
    <property type="match status" value="1"/>
</dbReference>
<dbReference type="SUPFAM" id="SSF51366">
    <property type="entry name" value="Ribulose-phoshate binding barrel"/>
    <property type="match status" value="1"/>
</dbReference>
<dbReference type="PROSITE" id="PS00156">
    <property type="entry name" value="OMPDECASE"/>
    <property type="match status" value="1"/>
</dbReference>
<proteinExistence type="inferred from homology"/>
<organism>
    <name type="scientific">Aliivibrio salmonicida (strain LFI1238)</name>
    <name type="common">Vibrio salmonicida (strain LFI1238)</name>
    <dbReference type="NCBI Taxonomy" id="316275"/>
    <lineage>
        <taxon>Bacteria</taxon>
        <taxon>Pseudomonadati</taxon>
        <taxon>Pseudomonadota</taxon>
        <taxon>Gammaproteobacteria</taxon>
        <taxon>Vibrionales</taxon>
        <taxon>Vibrionaceae</taxon>
        <taxon>Aliivibrio</taxon>
    </lineage>
</organism>
<gene>
    <name evidence="1" type="primary">pyrF</name>
    <name type="ordered locus">VSAL_I2225</name>
</gene>